<organism>
    <name type="scientific">Oryza sativa</name>
    <name type="common">Rice</name>
    <dbReference type="NCBI Taxonomy" id="4530"/>
    <lineage>
        <taxon>Eukaryota</taxon>
        <taxon>Viridiplantae</taxon>
        <taxon>Streptophyta</taxon>
        <taxon>Embryophyta</taxon>
        <taxon>Tracheophyta</taxon>
        <taxon>Spermatophyta</taxon>
        <taxon>Magnoliopsida</taxon>
        <taxon>Liliopsida</taxon>
        <taxon>Poales</taxon>
        <taxon>Poaceae</taxon>
        <taxon>BOP clade</taxon>
        <taxon>Oryzoideae</taxon>
        <taxon>Oryzeae</taxon>
        <taxon>Oryzinae</taxon>
        <taxon>Oryza</taxon>
    </lineage>
</organism>
<dbReference type="EMBL" id="AY522331">
    <property type="status" value="NOT_ANNOTATED_CDS"/>
    <property type="molecule type" value="Genomic_DNA"/>
</dbReference>
<dbReference type="SMR" id="P0C473"/>
<dbReference type="GO" id="GO:0009507">
    <property type="term" value="C:chloroplast"/>
    <property type="evidence" value="ECO:0007669"/>
    <property type="project" value="UniProtKB-SubCell"/>
</dbReference>
<dbReference type="GO" id="GO:0005739">
    <property type="term" value="C:mitochondrion"/>
    <property type="evidence" value="ECO:0007669"/>
    <property type="project" value="GOC"/>
</dbReference>
<dbReference type="GO" id="GO:0009536">
    <property type="term" value="C:plastid"/>
    <property type="evidence" value="ECO:0000305"/>
    <property type="project" value="Gramene"/>
</dbReference>
<dbReference type="GO" id="GO:0015935">
    <property type="term" value="C:small ribosomal subunit"/>
    <property type="evidence" value="ECO:0007669"/>
    <property type="project" value="TreeGrafter"/>
</dbReference>
<dbReference type="GO" id="GO:0003735">
    <property type="term" value="F:structural constituent of ribosome"/>
    <property type="evidence" value="ECO:0007669"/>
    <property type="project" value="InterPro"/>
</dbReference>
<dbReference type="GO" id="GO:0032543">
    <property type="term" value="P:mitochondrial translation"/>
    <property type="evidence" value="ECO:0007669"/>
    <property type="project" value="TreeGrafter"/>
</dbReference>
<dbReference type="FunFam" id="3.30.1320.10:FF:000003">
    <property type="entry name" value="30S ribosomal protein S16, chloroplastic"/>
    <property type="match status" value="1"/>
</dbReference>
<dbReference type="Gene3D" id="3.30.1320.10">
    <property type="match status" value="1"/>
</dbReference>
<dbReference type="HAMAP" id="MF_00385">
    <property type="entry name" value="Ribosomal_bS16"/>
    <property type="match status" value="1"/>
</dbReference>
<dbReference type="InterPro" id="IPR000307">
    <property type="entry name" value="Ribosomal_bS16"/>
</dbReference>
<dbReference type="InterPro" id="IPR020592">
    <property type="entry name" value="Ribosomal_bS16_CS"/>
</dbReference>
<dbReference type="InterPro" id="IPR023803">
    <property type="entry name" value="Ribosomal_bS16_dom_sf"/>
</dbReference>
<dbReference type="NCBIfam" id="TIGR00002">
    <property type="entry name" value="S16"/>
    <property type="match status" value="1"/>
</dbReference>
<dbReference type="PANTHER" id="PTHR12919">
    <property type="entry name" value="30S RIBOSOMAL PROTEIN S16"/>
    <property type="match status" value="1"/>
</dbReference>
<dbReference type="PANTHER" id="PTHR12919:SF20">
    <property type="entry name" value="SMALL RIBOSOMAL SUBUNIT PROTEIN BS16M"/>
    <property type="match status" value="1"/>
</dbReference>
<dbReference type="Pfam" id="PF00886">
    <property type="entry name" value="Ribosomal_S16"/>
    <property type="match status" value="1"/>
</dbReference>
<dbReference type="SUPFAM" id="SSF54565">
    <property type="entry name" value="Ribosomal protein S16"/>
    <property type="match status" value="1"/>
</dbReference>
<dbReference type="PROSITE" id="PS00732">
    <property type="entry name" value="RIBOSOMAL_S16"/>
    <property type="match status" value="1"/>
</dbReference>
<gene>
    <name evidence="1" type="primary">rps16</name>
</gene>
<comment type="subcellular location">
    <subcellularLocation>
        <location>Plastid</location>
        <location>Chloroplast</location>
    </subcellularLocation>
</comment>
<comment type="similarity">
    <text evidence="1">Belongs to the bacterial ribosomal protein bS16 family.</text>
</comment>
<keyword id="KW-0150">Chloroplast</keyword>
<keyword id="KW-0934">Plastid</keyword>
<keyword id="KW-0687">Ribonucleoprotein</keyword>
<keyword id="KW-0689">Ribosomal protein</keyword>
<name>RR16_ORYSA</name>
<geneLocation type="chloroplast"/>
<sequence length="85" mass="10056">MLKLRLKRCGRKQRAVYRIVAIDVRSRREGRDLRKVGFYDPIKNQTCLNVPAILYFLEKGAQPTRTVSDILRKAEFFKEKERTLS</sequence>
<proteinExistence type="inferred from homology"/>
<accession>P0C473</accession>
<feature type="chain" id="PRO_0000290073" description="Small ribosomal subunit protein bS16c">
    <location>
        <begin position="1"/>
        <end position="85"/>
    </location>
</feature>
<reference key="1">
    <citation type="journal article" date="2004" name="Plant Physiol.">
        <title>A comparison of rice chloroplast genomes.</title>
        <authorList>
            <person name="Tang J."/>
            <person name="Xia H."/>
            <person name="Cao M."/>
            <person name="Zhang X."/>
            <person name="Zeng W."/>
            <person name="Hu S."/>
            <person name="Tong W."/>
            <person name="Wang J."/>
            <person name="Wang J."/>
            <person name="Yu J."/>
            <person name="Yang H."/>
            <person name="Zhu L."/>
        </authorList>
    </citation>
    <scope>NUCLEOTIDE SEQUENCE [LARGE SCALE GENOMIC DNA]</scope>
    <source>
        <strain>cv. PA64s</strain>
    </source>
</reference>
<evidence type="ECO:0000255" key="1">
    <source>
        <dbReference type="HAMAP-Rule" id="MF_00385"/>
    </source>
</evidence>
<evidence type="ECO:0000305" key="2"/>
<protein>
    <recommendedName>
        <fullName evidence="1">Small ribosomal subunit protein bS16c</fullName>
    </recommendedName>
    <alternativeName>
        <fullName evidence="2">30S ribosomal protein S16, chloroplastic</fullName>
    </alternativeName>
</protein>